<protein>
    <recommendedName>
        <fullName evidence="1">Adenylosuccinate synthetase</fullName>
        <shortName evidence="1">AMPSase</shortName>
        <shortName evidence="1">AdSS</shortName>
        <ecNumber evidence="1">6.3.4.4</ecNumber>
    </recommendedName>
    <alternativeName>
        <fullName evidence="1">IMP--aspartate ligase</fullName>
    </alternativeName>
</protein>
<accession>A5UIZ2</accession>
<keyword id="KW-0963">Cytoplasm</keyword>
<keyword id="KW-0342">GTP-binding</keyword>
<keyword id="KW-0436">Ligase</keyword>
<keyword id="KW-0460">Magnesium</keyword>
<keyword id="KW-0479">Metal-binding</keyword>
<keyword id="KW-0547">Nucleotide-binding</keyword>
<keyword id="KW-0658">Purine biosynthesis</keyword>
<sequence length="432" mass="47352">MGKSVVILGAQWGDEGKGKIVDLLTDRVKYVVRYQGGHNAGHTLIINGEKTVLRLIPSGMLHPNVTCLIGNGVVVSPEALMKEMGELESRGIKVRERLLISEACPLILPYHVAMDHAREAALGKKAIGTTGRGIGPAYEDKVARRGLRIGDLFNKEAFAEKLKNILEYYNFQLVNYYKVEPVDYQKTLDDVMAIADVITGMVADITTILDTARKNGEHILFEGAQGTMLDIDHGTYPYVTSSNTTAGGVATGSGFGPRNLDYVLGIIKAYCTRVGGGPFTTELFDDVGAEIARKGNEFGAVTGRPRRCGWFDAVAIRRAIQLNSISGFCMTKLDVLDGFDEVKICVAYKMPNGEIVEYAPLAAKDWDGVEPIYETLPGWKENTFRITDVNKLPQNCINYIKRIEEVTGVPIDILSTGPDRVETMILRDPFAA</sequence>
<evidence type="ECO:0000255" key="1">
    <source>
        <dbReference type="HAMAP-Rule" id="MF_00011"/>
    </source>
</evidence>
<comment type="function">
    <text evidence="1">Plays an important role in the de novo pathway of purine nucleotide biosynthesis. Catalyzes the first committed step in the biosynthesis of AMP from IMP.</text>
</comment>
<comment type="catalytic activity">
    <reaction evidence="1">
        <text>IMP + L-aspartate + GTP = N(6)-(1,2-dicarboxyethyl)-AMP + GDP + phosphate + 2 H(+)</text>
        <dbReference type="Rhea" id="RHEA:15753"/>
        <dbReference type="ChEBI" id="CHEBI:15378"/>
        <dbReference type="ChEBI" id="CHEBI:29991"/>
        <dbReference type="ChEBI" id="CHEBI:37565"/>
        <dbReference type="ChEBI" id="CHEBI:43474"/>
        <dbReference type="ChEBI" id="CHEBI:57567"/>
        <dbReference type="ChEBI" id="CHEBI:58053"/>
        <dbReference type="ChEBI" id="CHEBI:58189"/>
        <dbReference type="EC" id="6.3.4.4"/>
    </reaction>
</comment>
<comment type="cofactor">
    <cofactor evidence="1">
        <name>Mg(2+)</name>
        <dbReference type="ChEBI" id="CHEBI:18420"/>
    </cofactor>
    <text evidence="1">Binds 1 Mg(2+) ion per subunit.</text>
</comment>
<comment type="pathway">
    <text evidence="1">Purine metabolism; AMP biosynthesis via de novo pathway; AMP from IMP: step 1/2.</text>
</comment>
<comment type="subunit">
    <text evidence="1">Homodimer.</text>
</comment>
<comment type="subcellular location">
    <subcellularLocation>
        <location evidence="1">Cytoplasm</location>
    </subcellularLocation>
</comment>
<comment type="similarity">
    <text evidence="1">Belongs to the adenylosuccinate synthetase family.</text>
</comment>
<feature type="chain" id="PRO_1000000832" description="Adenylosuccinate synthetase">
    <location>
        <begin position="1"/>
        <end position="432"/>
    </location>
</feature>
<feature type="active site" description="Proton acceptor" evidence="1">
    <location>
        <position position="14"/>
    </location>
</feature>
<feature type="active site" description="Proton donor" evidence="1">
    <location>
        <position position="42"/>
    </location>
</feature>
<feature type="binding site" evidence="1">
    <location>
        <begin position="13"/>
        <end position="19"/>
    </location>
    <ligand>
        <name>GTP</name>
        <dbReference type="ChEBI" id="CHEBI:37565"/>
    </ligand>
</feature>
<feature type="binding site" description="in other chain" evidence="1">
    <location>
        <begin position="14"/>
        <end position="17"/>
    </location>
    <ligand>
        <name>IMP</name>
        <dbReference type="ChEBI" id="CHEBI:58053"/>
        <note>ligand shared between dimeric partners</note>
    </ligand>
</feature>
<feature type="binding site" evidence="1">
    <location>
        <position position="14"/>
    </location>
    <ligand>
        <name>Mg(2+)</name>
        <dbReference type="ChEBI" id="CHEBI:18420"/>
    </ligand>
</feature>
<feature type="binding site" description="in other chain" evidence="1">
    <location>
        <begin position="39"/>
        <end position="42"/>
    </location>
    <ligand>
        <name>IMP</name>
        <dbReference type="ChEBI" id="CHEBI:58053"/>
        <note>ligand shared between dimeric partners</note>
    </ligand>
</feature>
<feature type="binding site" evidence="1">
    <location>
        <begin position="41"/>
        <end position="43"/>
    </location>
    <ligand>
        <name>GTP</name>
        <dbReference type="ChEBI" id="CHEBI:37565"/>
    </ligand>
</feature>
<feature type="binding site" evidence="1">
    <location>
        <position position="41"/>
    </location>
    <ligand>
        <name>Mg(2+)</name>
        <dbReference type="ChEBI" id="CHEBI:18420"/>
    </ligand>
</feature>
<feature type="binding site" description="in other chain" evidence="1">
    <location>
        <position position="130"/>
    </location>
    <ligand>
        <name>IMP</name>
        <dbReference type="ChEBI" id="CHEBI:58053"/>
        <note>ligand shared between dimeric partners</note>
    </ligand>
</feature>
<feature type="binding site" evidence="1">
    <location>
        <position position="144"/>
    </location>
    <ligand>
        <name>IMP</name>
        <dbReference type="ChEBI" id="CHEBI:58053"/>
        <note>ligand shared between dimeric partners</note>
    </ligand>
</feature>
<feature type="binding site" description="in other chain" evidence="1">
    <location>
        <position position="225"/>
    </location>
    <ligand>
        <name>IMP</name>
        <dbReference type="ChEBI" id="CHEBI:58053"/>
        <note>ligand shared between dimeric partners</note>
    </ligand>
</feature>
<feature type="binding site" description="in other chain" evidence="1">
    <location>
        <position position="240"/>
    </location>
    <ligand>
        <name>IMP</name>
        <dbReference type="ChEBI" id="CHEBI:58053"/>
        <note>ligand shared between dimeric partners</note>
    </ligand>
</feature>
<feature type="binding site" evidence="1">
    <location>
        <begin position="300"/>
        <end position="306"/>
    </location>
    <ligand>
        <name>substrate</name>
    </ligand>
</feature>
<feature type="binding site" description="in other chain" evidence="1">
    <location>
        <position position="304"/>
    </location>
    <ligand>
        <name>IMP</name>
        <dbReference type="ChEBI" id="CHEBI:58053"/>
        <note>ligand shared between dimeric partners</note>
    </ligand>
</feature>
<feature type="binding site" evidence="1">
    <location>
        <position position="306"/>
    </location>
    <ligand>
        <name>GTP</name>
        <dbReference type="ChEBI" id="CHEBI:37565"/>
    </ligand>
</feature>
<feature type="binding site" evidence="1">
    <location>
        <begin position="332"/>
        <end position="334"/>
    </location>
    <ligand>
        <name>GTP</name>
        <dbReference type="ChEBI" id="CHEBI:37565"/>
    </ligand>
</feature>
<feature type="binding site" evidence="1">
    <location>
        <begin position="415"/>
        <end position="417"/>
    </location>
    <ligand>
        <name>GTP</name>
        <dbReference type="ChEBI" id="CHEBI:37565"/>
    </ligand>
</feature>
<name>PURA_HAEIG</name>
<gene>
    <name evidence="1" type="primary">purA</name>
    <name type="ordered locus">CGSHiGG_09925</name>
</gene>
<organism>
    <name type="scientific">Haemophilus influenzae (strain PittGG)</name>
    <dbReference type="NCBI Taxonomy" id="374931"/>
    <lineage>
        <taxon>Bacteria</taxon>
        <taxon>Pseudomonadati</taxon>
        <taxon>Pseudomonadota</taxon>
        <taxon>Gammaproteobacteria</taxon>
        <taxon>Pasteurellales</taxon>
        <taxon>Pasteurellaceae</taxon>
        <taxon>Haemophilus</taxon>
    </lineage>
</organism>
<reference key="1">
    <citation type="journal article" date="2007" name="Genome Biol.">
        <title>Characterization and modeling of the Haemophilus influenzae core and supragenomes based on the complete genomic sequences of Rd and 12 clinical nontypeable strains.</title>
        <authorList>
            <person name="Hogg J.S."/>
            <person name="Hu F.Z."/>
            <person name="Janto B."/>
            <person name="Boissy R."/>
            <person name="Hayes J."/>
            <person name="Keefe R."/>
            <person name="Post J.C."/>
            <person name="Ehrlich G.D."/>
        </authorList>
    </citation>
    <scope>NUCLEOTIDE SEQUENCE [LARGE SCALE GENOMIC DNA]</scope>
    <source>
        <strain>PittGG</strain>
    </source>
</reference>
<proteinExistence type="inferred from homology"/>
<dbReference type="EC" id="6.3.4.4" evidence="1"/>
<dbReference type="EMBL" id="CP000672">
    <property type="protein sequence ID" value="ABR00748.1"/>
    <property type="molecule type" value="Genomic_DNA"/>
</dbReference>
<dbReference type="SMR" id="A5UIZ2"/>
<dbReference type="KEGG" id="hiq:CGSHiGG_09925"/>
<dbReference type="HOGENOM" id="CLU_029848_0_0_6"/>
<dbReference type="UniPathway" id="UPA00075">
    <property type="reaction ID" value="UER00335"/>
</dbReference>
<dbReference type="Proteomes" id="UP000001990">
    <property type="component" value="Chromosome"/>
</dbReference>
<dbReference type="GO" id="GO:0005737">
    <property type="term" value="C:cytoplasm"/>
    <property type="evidence" value="ECO:0007669"/>
    <property type="project" value="UniProtKB-SubCell"/>
</dbReference>
<dbReference type="GO" id="GO:0004019">
    <property type="term" value="F:adenylosuccinate synthase activity"/>
    <property type="evidence" value="ECO:0007669"/>
    <property type="project" value="UniProtKB-UniRule"/>
</dbReference>
<dbReference type="GO" id="GO:0005525">
    <property type="term" value="F:GTP binding"/>
    <property type="evidence" value="ECO:0007669"/>
    <property type="project" value="UniProtKB-UniRule"/>
</dbReference>
<dbReference type="GO" id="GO:0000287">
    <property type="term" value="F:magnesium ion binding"/>
    <property type="evidence" value="ECO:0007669"/>
    <property type="project" value="UniProtKB-UniRule"/>
</dbReference>
<dbReference type="GO" id="GO:0044208">
    <property type="term" value="P:'de novo' AMP biosynthetic process"/>
    <property type="evidence" value="ECO:0007669"/>
    <property type="project" value="UniProtKB-UniRule"/>
</dbReference>
<dbReference type="GO" id="GO:0046040">
    <property type="term" value="P:IMP metabolic process"/>
    <property type="evidence" value="ECO:0007669"/>
    <property type="project" value="TreeGrafter"/>
</dbReference>
<dbReference type="CDD" id="cd03108">
    <property type="entry name" value="AdSS"/>
    <property type="match status" value="1"/>
</dbReference>
<dbReference type="FunFam" id="1.10.300.10:FF:000001">
    <property type="entry name" value="Adenylosuccinate synthetase"/>
    <property type="match status" value="1"/>
</dbReference>
<dbReference type="FunFam" id="3.90.170.10:FF:000001">
    <property type="entry name" value="Adenylosuccinate synthetase"/>
    <property type="match status" value="1"/>
</dbReference>
<dbReference type="Gene3D" id="3.40.440.10">
    <property type="entry name" value="Adenylosuccinate Synthetase, subunit A, domain 1"/>
    <property type="match status" value="1"/>
</dbReference>
<dbReference type="Gene3D" id="1.10.300.10">
    <property type="entry name" value="Adenylosuccinate Synthetase, subunit A, domain 2"/>
    <property type="match status" value="1"/>
</dbReference>
<dbReference type="Gene3D" id="3.90.170.10">
    <property type="entry name" value="Adenylosuccinate Synthetase, subunit A, domain 3"/>
    <property type="match status" value="1"/>
</dbReference>
<dbReference type="HAMAP" id="MF_00011">
    <property type="entry name" value="Adenylosucc_synth"/>
    <property type="match status" value="1"/>
</dbReference>
<dbReference type="InterPro" id="IPR018220">
    <property type="entry name" value="Adenylosuccin_syn_GTP-bd"/>
</dbReference>
<dbReference type="InterPro" id="IPR033128">
    <property type="entry name" value="Adenylosuccin_syn_Lys_AS"/>
</dbReference>
<dbReference type="InterPro" id="IPR042109">
    <property type="entry name" value="Adenylosuccinate_synth_dom1"/>
</dbReference>
<dbReference type="InterPro" id="IPR042110">
    <property type="entry name" value="Adenylosuccinate_synth_dom2"/>
</dbReference>
<dbReference type="InterPro" id="IPR042111">
    <property type="entry name" value="Adenylosuccinate_synth_dom3"/>
</dbReference>
<dbReference type="InterPro" id="IPR001114">
    <property type="entry name" value="Adenylosuccinate_synthetase"/>
</dbReference>
<dbReference type="InterPro" id="IPR027417">
    <property type="entry name" value="P-loop_NTPase"/>
</dbReference>
<dbReference type="NCBIfam" id="NF002223">
    <property type="entry name" value="PRK01117.1"/>
    <property type="match status" value="1"/>
</dbReference>
<dbReference type="NCBIfam" id="TIGR00184">
    <property type="entry name" value="purA"/>
    <property type="match status" value="1"/>
</dbReference>
<dbReference type="PANTHER" id="PTHR11846">
    <property type="entry name" value="ADENYLOSUCCINATE SYNTHETASE"/>
    <property type="match status" value="1"/>
</dbReference>
<dbReference type="PANTHER" id="PTHR11846:SF0">
    <property type="entry name" value="ADENYLOSUCCINATE SYNTHETASE"/>
    <property type="match status" value="1"/>
</dbReference>
<dbReference type="Pfam" id="PF00709">
    <property type="entry name" value="Adenylsucc_synt"/>
    <property type="match status" value="1"/>
</dbReference>
<dbReference type="SMART" id="SM00788">
    <property type="entry name" value="Adenylsucc_synt"/>
    <property type="match status" value="1"/>
</dbReference>
<dbReference type="SUPFAM" id="SSF52540">
    <property type="entry name" value="P-loop containing nucleoside triphosphate hydrolases"/>
    <property type="match status" value="1"/>
</dbReference>
<dbReference type="PROSITE" id="PS01266">
    <property type="entry name" value="ADENYLOSUCCIN_SYN_1"/>
    <property type="match status" value="1"/>
</dbReference>
<dbReference type="PROSITE" id="PS00513">
    <property type="entry name" value="ADENYLOSUCCIN_SYN_2"/>
    <property type="match status" value="1"/>
</dbReference>